<name>Y1050_STAAT</name>
<gene>
    <name type="ordered locus">USA300HOU_1050</name>
</gene>
<dbReference type="EMBL" id="CP000730">
    <property type="protein sequence ID" value="ABX29070.1"/>
    <property type="molecule type" value="Genomic_DNA"/>
</dbReference>
<dbReference type="RefSeq" id="WP_001118417.1">
    <property type="nucleotide sequence ID" value="NC_010079.1"/>
</dbReference>
<dbReference type="SMR" id="A8Z1P7"/>
<dbReference type="KEGG" id="sax:USA300HOU_1050"/>
<dbReference type="HOGENOM" id="CLU_160493_1_0_9"/>
<dbReference type="BioCyc" id="SAUR451516-HMP:GTV5-1070-MONOMER"/>
<dbReference type="Gene3D" id="1.10.287.750">
    <property type="entry name" value="SO2669-like"/>
    <property type="match status" value="1"/>
</dbReference>
<dbReference type="HAMAP" id="MF_01560">
    <property type="entry name" value="UPF0358"/>
    <property type="match status" value="1"/>
</dbReference>
<dbReference type="InterPro" id="IPR009983">
    <property type="entry name" value="UPF0358"/>
</dbReference>
<dbReference type="InterPro" id="IPR036270">
    <property type="entry name" value="UPF0358_sf"/>
</dbReference>
<dbReference type="NCBIfam" id="NF010187">
    <property type="entry name" value="PRK13666.1"/>
    <property type="match status" value="1"/>
</dbReference>
<dbReference type="Pfam" id="PF07408">
    <property type="entry name" value="DUF1507"/>
    <property type="match status" value="1"/>
</dbReference>
<dbReference type="SUPFAM" id="SSF140404">
    <property type="entry name" value="EF2458-like"/>
    <property type="match status" value="1"/>
</dbReference>
<accession>A8Z1P7</accession>
<comment type="similarity">
    <text evidence="1">Belongs to the UPF0358 family.</text>
</comment>
<sequence>MAKQATMKNAALKQLTKDADEILHLIKVQLDNLTLPSCPLYEEVLDTQMFGLQKEVDFAVKLGLVDREDGKQIMLRLEKELSKLHEAFTLV</sequence>
<proteinExistence type="inferred from homology"/>
<feature type="chain" id="PRO_1000087805" description="UPF0358 protein USA300HOU_1050">
    <location>
        <begin position="1"/>
        <end position="91"/>
    </location>
</feature>
<evidence type="ECO:0000255" key="1">
    <source>
        <dbReference type="HAMAP-Rule" id="MF_01560"/>
    </source>
</evidence>
<organism>
    <name type="scientific">Staphylococcus aureus (strain USA300 / TCH1516)</name>
    <dbReference type="NCBI Taxonomy" id="451516"/>
    <lineage>
        <taxon>Bacteria</taxon>
        <taxon>Bacillati</taxon>
        <taxon>Bacillota</taxon>
        <taxon>Bacilli</taxon>
        <taxon>Bacillales</taxon>
        <taxon>Staphylococcaceae</taxon>
        <taxon>Staphylococcus</taxon>
    </lineage>
</organism>
<reference key="1">
    <citation type="journal article" date="2007" name="BMC Microbiol.">
        <title>Subtle genetic changes enhance virulence of methicillin resistant and sensitive Staphylococcus aureus.</title>
        <authorList>
            <person name="Highlander S.K."/>
            <person name="Hulten K.G."/>
            <person name="Qin X."/>
            <person name="Jiang H."/>
            <person name="Yerrapragada S."/>
            <person name="Mason E.O. Jr."/>
            <person name="Shang Y."/>
            <person name="Williams T.M."/>
            <person name="Fortunov R.M."/>
            <person name="Liu Y."/>
            <person name="Igboeli O."/>
            <person name="Petrosino J."/>
            <person name="Tirumalai M."/>
            <person name="Uzman A."/>
            <person name="Fox G.E."/>
            <person name="Cardenas A.M."/>
            <person name="Muzny D.M."/>
            <person name="Hemphill L."/>
            <person name="Ding Y."/>
            <person name="Dugan S."/>
            <person name="Blyth P.R."/>
            <person name="Buhay C.J."/>
            <person name="Dinh H.H."/>
            <person name="Hawes A.C."/>
            <person name="Holder M."/>
            <person name="Kovar C.L."/>
            <person name="Lee S.L."/>
            <person name="Liu W."/>
            <person name="Nazareth L.V."/>
            <person name="Wang Q."/>
            <person name="Zhou J."/>
            <person name="Kaplan S.L."/>
            <person name="Weinstock G.M."/>
        </authorList>
    </citation>
    <scope>NUCLEOTIDE SEQUENCE [LARGE SCALE GENOMIC DNA]</scope>
    <source>
        <strain>USA300 / TCH1516</strain>
    </source>
</reference>
<protein>
    <recommendedName>
        <fullName evidence="1">UPF0358 protein USA300HOU_1050</fullName>
    </recommendedName>
</protein>